<sequence>MSKIVKIIGREIIDSRGNPTVEAEVHLEGGFVGMAAAPSGASTGSREALELRDGDKSRFLGKGVTKAVAAVNGPIAQALIGKDAKDQAGIDKIMIDLDGTENKSKFGANAILAVSLANAKAAAAAKGMPLYEHIAELNGTPGKYSMPVPMMNIINGGEHADNNVDIQEFMIQPVGAKTVKEAIRMGSEVFHHLAKVLKAKGMNTAVGDEGGYAPNLGSNAEALAVIAEAVKAAGYELGKDITLAMDCAASEFYKDGKYVLAGEGNKAFTSEEFTHFLEELTKQYPIVSIEDGLDESDWDGFAYQTKVLGDKIQLVGDDLFVTNTKILKEGIEKGIANSILIKFNQIGSLTETLAAIKMAKDAGYTAVISHRSGETEDATIADLAVGTAAGQIKTGSMSRSDRVAKYNQLIRIEEALGEKAPYNGRKEIKGQA</sequence>
<accession>B7LEJ8</accession>
<gene>
    <name evidence="1" type="primary">eno</name>
    <name type="ordered locus">EC55989_3054</name>
</gene>
<feature type="chain" id="PRO_1000189948" description="Enolase">
    <location>
        <begin position="1"/>
        <end position="432"/>
    </location>
</feature>
<feature type="active site" description="Proton donor" evidence="1">
    <location>
        <position position="209"/>
    </location>
</feature>
<feature type="active site" description="Proton acceptor" evidence="1">
    <location>
        <position position="342"/>
    </location>
</feature>
<feature type="binding site" evidence="1">
    <location>
        <position position="167"/>
    </location>
    <ligand>
        <name>(2R)-2-phosphoglycerate</name>
        <dbReference type="ChEBI" id="CHEBI:58289"/>
    </ligand>
</feature>
<feature type="binding site" evidence="1">
    <location>
        <position position="246"/>
    </location>
    <ligand>
        <name>Mg(2+)</name>
        <dbReference type="ChEBI" id="CHEBI:18420"/>
    </ligand>
</feature>
<feature type="binding site" evidence="1">
    <location>
        <position position="290"/>
    </location>
    <ligand>
        <name>Mg(2+)</name>
        <dbReference type="ChEBI" id="CHEBI:18420"/>
    </ligand>
</feature>
<feature type="binding site" evidence="1">
    <location>
        <position position="317"/>
    </location>
    <ligand>
        <name>Mg(2+)</name>
        <dbReference type="ChEBI" id="CHEBI:18420"/>
    </ligand>
</feature>
<feature type="binding site" evidence="1">
    <location>
        <position position="342"/>
    </location>
    <ligand>
        <name>(2R)-2-phosphoglycerate</name>
        <dbReference type="ChEBI" id="CHEBI:58289"/>
    </ligand>
</feature>
<feature type="binding site" evidence="1">
    <location>
        <position position="371"/>
    </location>
    <ligand>
        <name>(2R)-2-phosphoglycerate</name>
        <dbReference type="ChEBI" id="CHEBI:58289"/>
    </ligand>
</feature>
<feature type="binding site" evidence="1">
    <location>
        <position position="372"/>
    </location>
    <ligand>
        <name>(2R)-2-phosphoglycerate</name>
        <dbReference type="ChEBI" id="CHEBI:58289"/>
    </ligand>
</feature>
<feature type="binding site" evidence="1">
    <location>
        <position position="393"/>
    </location>
    <ligand>
        <name>(2R)-2-phosphoglycerate</name>
        <dbReference type="ChEBI" id="CHEBI:58289"/>
    </ligand>
</feature>
<evidence type="ECO:0000255" key="1">
    <source>
        <dbReference type="HAMAP-Rule" id="MF_00318"/>
    </source>
</evidence>
<comment type="function">
    <text evidence="1">Catalyzes the reversible conversion of 2-phosphoglycerate (2-PG) into phosphoenolpyruvate (PEP). It is essential for the degradation of carbohydrates via glycolysis.</text>
</comment>
<comment type="catalytic activity">
    <reaction evidence="1">
        <text>(2R)-2-phosphoglycerate = phosphoenolpyruvate + H2O</text>
        <dbReference type="Rhea" id="RHEA:10164"/>
        <dbReference type="ChEBI" id="CHEBI:15377"/>
        <dbReference type="ChEBI" id="CHEBI:58289"/>
        <dbReference type="ChEBI" id="CHEBI:58702"/>
        <dbReference type="EC" id="4.2.1.11"/>
    </reaction>
</comment>
<comment type="cofactor">
    <cofactor evidence="1">
        <name>Mg(2+)</name>
        <dbReference type="ChEBI" id="CHEBI:18420"/>
    </cofactor>
    <text evidence="1">Binds a second Mg(2+) ion via substrate during catalysis.</text>
</comment>
<comment type="pathway">
    <text evidence="1">Carbohydrate degradation; glycolysis; pyruvate from D-glyceraldehyde 3-phosphate: step 4/5.</text>
</comment>
<comment type="subunit">
    <text evidence="1">Component of the RNA degradosome, a multiprotein complex involved in RNA processing and mRNA degradation.</text>
</comment>
<comment type="subcellular location">
    <subcellularLocation>
        <location evidence="1">Cytoplasm</location>
    </subcellularLocation>
    <subcellularLocation>
        <location evidence="1">Secreted</location>
    </subcellularLocation>
    <subcellularLocation>
        <location evidence="1">Cell surface</location>
    </subcellularLocation>
    <text evidence="1">Fractions of enolase are present in both the cytoplasm and on the cell surface.</text>
</comment>
<comment type="similarity">
    <text evidence="1">Belongs to the enolase family.</text>
</comment>
<name>ENO_ECO55</name>
<protein>
    <recommendedName>
        <fullName evidence="1">Enolase</fullName>
        <ecNumber evidence="1">4.2.1.11</ecNumber>
    </recommendedName>
    <alternativeName>
        <fullName evidence="1">2-phospho-D-glycerate hydro-lyase</fullName>
    </alternativeName>
    <alternativeName>
        <fullName evidence="1">2-phosphoglycerate dehydratase</fullName>
    </alternativeName>
</protein>
<keyword id="KW-0963">Cytoplasm</keyword>
<keyword id="KW-0324">Glycolysis</keyword>
<keyword id="KW-0456">Lyase</keyword>
<keyword id="KW-0460">Magnesium</keyword>
<keyword id="KW-0479">Metal-binding</keyword>
<keyword id="KW-1185">Reference proteome</keyword>
<keyword id="KW-0964">Secreted</keyword>
<organism>
    <name type="scientific">Escherichia coli (strain 55989 / EAEC)</name>
    <dbReference type="NCBI Taxonomy" id="585055"/>
    <lineage>
        <taxon>Bacteria</taxon>
        <taxon>Pseudomonadati</taxon>
        <taxon>Pseudomonadota</taxon>
        <taxon>Gammaproteobacteria</taxon>
        <taxon>Enterobacterales</taxon>
        <taxon>Enterobacteriaceae</taxon>
        <taxon>Escherichia</taxon>
    </lineage>
</organism>
<dbReference type="EC" id="4.2.1.11" evidence="1"/>
<dbReference type="EMBL" id="CU928145">
    <property type="protein sequence ID" value="CAU98935.1"/>
    <property type="molecule type" value="Genomic_DNA"/>
</dbReference>
<dbReference type="RefSeq" id="WP_000036723.1">
    <property type="nucleotide sequence ID" value="NZ_CP028304.1"/>
</dbReference>
<dbReference type="SMR" id="B7LEJ8"/>
<dbReference type="GeneID" id="93779219"/>
<dbReference type="KEGG" id="eck:EC55989_3054"/>
<dbReference type="HOGENOM" id="CLU_031223_2_1_6"/>
<dbReference type="UniPathway" id="UPA00109">
    <property type="reaction ID" value="UER00187"/>
</dbReference>
<dbReference type="Proteomes" id="UP000000746">
    <property type="component" value="Chromosome"/>
</dbReference>
<dbReference type="GO" id="GO:0009986">
    <property type="term" value="C:cell surface"/>
    <property type="evidence" value="ECO:0007669"/>
    <property type="project" value="UniProtKB-SubCell"/>
</dbReference>
<dbReference type="GO" id="GO:0005576">
    <property type="term" value="C:extracellular region"/>
    <property type="evidence" value="ECO:0007669"/>
    <property type="project" value="UniProtKB-SubCell"/>
</dbReference>
<dbReference type="GO" id="GO:0000015">
    <property type="term" value="C:phosphopyruvate hydratase complex"/>
    <property type="evidence" value="ECO:0007669"/>
    <property type="project" value="InterPro"/>
</dbReference>
<dbReference type="GO" id="GO:0000287">
    <property type="term" value="F:magnesium ion binding"/>
    <property type="evidence" value="ECO:0007669"/>
    <property type="project" value="UniProtKB-UniRule"/>
</dbReference>
<dbReference type="GO" id="GO:0004634">
    <property type="term" value="F:phosphopyruvate hydratase activity"/>
    <property type="evidence" value="ECO:0007669"/>
    <property type="project" value="UniProtKB-UniRule"/>
</dbReference>
<dbReference type="GO" id="GO:0006096">
    <property type="term" value="P:glycolytic process"/>
    <property type="evidence" value="ECO:0007669"/>
    <property type="project" value="UniProtKB-UniRule"/>
</dbReference>
<dbReference type="CDD" id="cd03313">
    <property type="entry name" value="enolase"/>
    <property type="match status" value="1"/>
</dbReference>
<dbReference type="FunFam" id="3.20.20.120:FF:000001">
    <property type="entry name" value="Enolase"/>
    <property type="match status" value="1"/>
</dbReference>
<dbReference type="FunFam" id="3.30.390.10:FF:000001">
    <property type="entry name" value="Enolase"/>
    <property type="match status" value="1"/>
</dbReference>
<dbReference type="Gene3D" id="3.20.20.120">
    <property type="entry name" value="Enolase-like C-terminal domain"/>
    <property type="match status" value="1"/>
</dbReference>
<dbReference type="Gene3D" id="3.30.390.10">
    <property type="entry name" value="Enolase-like, N-terminal domain"/>
    <property type="match status" value="1"/>
</dbReference>
<dbReference type="HAMAP" id="MF_00318">
    <property type="entry name" value="Enolase"/>
    <property type="match status" value="1"/>
</dbReference>
<dbReference type="InterPro" id="IPR000941">
    <property type="entry name" value="Enolase"/>
</dbReference>
<dbReference type="InterPro" id="IPR036849">
    <property type="entry name" value="Enolase-like_C_sf"/>
</dbReference>
<dbReference type="InterPro" id="IPR029017">
    <property type="entry name" value="Enolase-like_N"/>
</dbReference>
<dbReference type="InterPro" id="IPR020810">
    <property type="entry name" value="Enolase_C"/>
</dbReference>
<dbReference type="InterPro" id="IPR020809">
    <property type="entry name" value="Enolase_CS"/>
</dbReference>
<dbReference type="InterPro" id="IPR020811">
    <property type="entry name" value="Enolase_N"/>
</dbReference>
<dbReference type="NCBIfam" id="TIGR01060">
    <property type="entry name" value="eno"/>
    <property type="match status" value="1"/>
</dbReference>
<dbReference type="PANTHER" id="PTHR11902">
    <property type="entry name" value="ENOLASE"/>
    <property type="match status" value="1"/>
</dbReference>
<dbReference type="PANTHER" id="PTHR11902:SF1">
    <property type="entry name" value="ENOLASE"/>
    <property type="match status" value="1"/>
</dbReference>
<dbReference type="Pfam" id="PF00113">
    <property type="entry name" value="Enolase_C"/>
    <property type="match status" value="1"/>
</dbReference>
<dbReference type="Pfam" id="PF03952">
    <property type="entry name" value="Enolase_N"/>
    <property type="match status" value="1"/>
</dbReference>
<dbReference type="PIRSF" id="PIRSF001400">
    <property type="entry name" value="Enolase"/>
    <property type="match status" value="1"/>
</dbReference>
<dbReference type="PRINTS" id="PR00148">
    <property type="entry name" value="ENOLASE"/>
</dbReference>
<dbReference type="SFLD" id="SFLDS00001">
    <property type="entry name" value="Enolase"/>
    <property type="match status" value="1"/>
</dbReference>
<dbReference type="SFLD" id="SFLDF00002">
    <property type="entry name" value="enolase"/>
    <property type="match status" value="1"/>
</dbReference>
<dbReference type="SMART" id="SM01192">
    <property type="entry name" value="Enolase_C"/>
    <property type="match status" value="1"/>
</dbReference>
<dbReference type="SMART" id="SM01193">
    <property type="entry name" value="Enolase_N"/>
    <property type="match status" value="1"/>
</dbReference>
<dbReference type="SUPFAM" id="SSF51604">
    <property type="entry name" value="Enolase C-terminal domain-like"/>
    <property type="match status" value="1"/>
</dbReference>
<dbReference type="SUPFAM" id="SSF54826">
    <property type="entry name" value="Enolase N-terminal domain-like"/>
    <property type="match status" value="1"/>
</dbReference>
<dbReference type="PROSITE" id="PS00164">
    <property type="entry name" value="ENOLASE"/>
    <property type="match status" value="1"/>
</dbReference>
<reference key="1">
    <citation type="journal article" date="2009" name="PLoS Genet.">
        <title>Organised genome dynamics in the Escherichia coli species results in highly diverse adaptive paths.</title>
        <authorList>
            <person name="Touchon M."/>
            <person name="Hoede C."/>
            <person name="Tenaillon O."/>
            <person name="Barbe V."/>
            <person name="Baeriswyl S."/>
            <person name="Bidet P."/>
            <person name="Bingen E."/>
            <person name="Bonacorsi S."/>
            <person name="Bouchier C."/>
            <person name="Bouvet O."/>
            <person name="Calteau A."/>
            <person name="Chiapello H."/>
            <person name="Clermont O."/>
            <person name="Cruveiller S."/>
            <person name="Danchin A."/>
            <person name="Diard M."/>
            <person name="Dossat C."/>
            <person name="Karoui M.E."/>
            <person name="Frapy E."/>
            <person name="Garry L."/>
            <person name="Ghigo J.M."/>
            <person name="Gilles A.M."/>
            <person name="Johnson J."/>
            <person name="Le Bouguenec C."/>
            <person name="Lescat M."/>
            <person name="Mangenot S."/>
            <person name="Martinez-Jehanne V."/>
            <person name="Matic I."/>
            <person name="Nassif X."/>
            <person name="Oztas S."/>
            <person name="Petit M.A."/>
            <person name="Pichon C."/>
            <person name="Rouy Z."/>
            <person name="Ruf C.S."/>
            <person name="Schneider D."/>
            <person name="Tourret J."/>
            <person name="Vacherie B."/>
            <person name="Vallenet D."/>
            <person name="Medigue C."/>
            <person name="Rocha E.P.C."/>
            <person name="Denamur E."/>
        </authorList>
    </citation>
    <scope>NUCLEOTIDE SEQUENCE [LARGE SCALE GENOMIC DNA]</scope>
    <source>
        <strain>55989 / EAEC</strain>
    </source>
</reference>
<proteinExistence type="inferred from homology"/>